<evidence type="ECO:0000255" key="1">
    <source>
        <dbReference type="HAMAP-Rule" id="MF_00725"/>
    </source>
</evidence>
<evidence type="ECO:0000305" key="2"/>
<protein>
    <recommendedName>
        <fullName evidence="1">Flagellar transcriptional regulator FlhD</fullName>
    </recommendedName>
</protein>
<keyword id="KW-0010">Activator</keyword>
<keyword id="KW-1005">Bacterial flagellum biogenesis</keyword>
<keyword id="KW-0963">Cytoplasm</keyword>
<keyword id="KW-1015">Disulfide bond</keyword>
<keyword id="KW-0238">DNA-binding</keyword>
<keyword id="KW-1185">Reference proteome</keyword>
<keyword id="KW-0804">Transcription</keyword>
<keyword id="KW-0805">Transcription regulation</keyword>
<gene>
    <name evidence="1" type="primary">flhD</name>
    <name type="ordered locus">c2308</name>
</gene>
<dbReference type="EMBL" id="AE014075">
    <property type="protein sequence ID" value="AAN80767.1"/>
    <property type="status" value="ALT_INIT"/>
    <property type="molecule type" value="Genomic_DNA"/>
</dbReference>
<dbReference type="RefSeq" id="WP_001295647.1">
    <property type="nucleotide sequence ID" value="NZ_CP051263.1"/>
</dbReference>
<dbReference type="SMR" id="P0A8T0"/>
<dbReference type="STRING" id="199310.c2308"/>
<dbReference type="GeneID" id="93776197"/>
<dbReference type="KEGG" id="ecc:c2308"/>
<dbReference type="eggNOG" id="ENOG5031P80">
    <property type="taxonomic scope" value="Bacteria"/>
</dbReference>
<dbReference type="HOGENOM" id="CLU_144160_0_0_6"/>
<dbReference type="Proteomes" id="UP000001410">
    <property type="component" value="Chromosome"/>
</dbReference>
<dbReference type="GO" id="GO:0005737">
    <property type="term" value="C:cytoplasm"/>
    <property type="evidence" value="ECO:0007669"/>
    <property type="project" value="UniProtKB-SubCell"/>
</dbReference>
<dbReference type="GO" id="GO:0003677">
    <property type="term" value="F:DNA binding"/>
    <property type="evidence" value="ECO:0007669"/>
    <property type="project" value="UniProtKB-UniRule"/>
</dbReference>
<dbReference type="GO" id="GO:0044780">
    <property type="term" value="P:bacterial-type flagellum assembly"/>
    <property type="evidence" value="ECO:0007669"/>
    <property type="project" value="InterPro"/>
</dbReference>
<dbReference type="GO" id="GO:0045893">
    <property type="term" value="P:positive regulation of DNA-templated transcription"/>
    <property type="evidence" value="ECO:0007669"/>
    <property type="project" value="InterPro"/>
</dbReference>
<dbReference type="GO" id="GO:1902208">
    <property type="term" value="P:regulation of bacterial-type flagellum assembly"/>
    <property type="evidence" value="ECO:0007669"/>
    <property type="project" value="UniProtKB-UniRule"/>
</dbReference>
<dbReference type="FunFam" id="1.10.4000.10:FF:000001">
    <property type="entry name" value="Flagellar transcriptional regulator FlhD"/>
    <property type="match status" value="1"/>
</dbReference>
<dbReference type="Gene3D" id="1.10.4000.10">
    <property type="entry name" value="Flagellar transcriptional activator FlhD"/>
    <property type="match status" value="1"/>
</dbReference>
<dbReference type="HAMAP" id="MF_00725">
    <property type="entry name" value="FlhD"/>
    <property type="match status" value="1"/>
</dbReference>
<dbReference type="InterPro" id="IPR023559">
    <property type="entry name" value="Flagellar_FlhD"/>
</dbReference>
<dbReference type="InterPro" id="IPR036194">
    <property type="entry name" value="FlhD_sf"/>
</dbReference>
<dbReference type="NCBIfam" id="NF002783">
    <property type="entry name" value="PRK02909.1-1"/>
    <property type="match status" value="1"/>
</dbReference>
<dbReference type="Pfam" id="PF05247">
    <property type="entry name" value="FlhD"/>
    <property type="match status" value="1"/>
</dbReference>
<dbReference type="SUPFAM" id="SSF63592">
    <property type="entry name" value="Flagellar transcriptional activator FlhD"/>
    <property type="match status" value="1"/>
</dbReference>
<comment type="function">
    <text evidence="1">Functions in complex with FlhC as a master transcriptional regulator that regulates transcription of several flagellar and non-flagellar operons by binding to their promoter region. Activates expression of class 2 flagellar genes, including fliA, which is a flagellum-specific sigma factor that turns on the class 3 genes. Also regulates genes whose products function in a variety of physiological pathways.</text>
</comment>
<comment type="subunit">
    <text evidence="1">Homodimer; disulfide-linked. Forms a heterohexamer composed of two FlhC and four FlhD subunits. Each FlhC binds a FlhD dimer, forming a heterotrimer, and a hexamer assembles by dimerization of two heterotrimers.</text>
</comment>
<comment type="subcellular location">
    <subcellularLocation>
        <location evidence="1">Cytoplasm</location>
    </subcellularLocation>
</comment>
<comment type="domain">
    <text evidence="1">The C-terminal region contains a putative helix-turn-helix (HTH) motif, suggesting that this region may bind DNA.</text>
</comment>
<comment type="similarity">
    <text evidence="1">Belongs to the FlhD family.</text>
</comment>
<comment type="sequence caution" evidence="2">
    <conflict type="erroneous initiation">
        <sequence resource="EMBL-CDS" id="AAN80767"/>
    </conflict>
    <text>Extended N-terminus.</text>
</comment>
<feature type="chain" id="PRO_0000182714" description="Flagellar transcriptional regulator FlhD">
    <location>
        <begin position="1"/>
        <end position="116"/>
    </location>
</feature>
<feature type="disulfide bond" description="Interchain" evidence="1">
    <location>
        <position position="65"/>
    </location>
</feature>
<name>FLHD_ECOL6</name>
<organism>
    <name type="scientific">Escherichia coli O6:H1 (strain CFT073 / ATCC 700928 / UPEC)</name>
    <dbReference type="NCBI Taxonomy" id="199310"/>
    <lineage>
        <taxon>Bacteria</taxon>
        <taxon>Pseudomonadati</taxon>
        <taxon>Pseudomonadota</taxon>
        <taxon>Gammaproteobacteria</taxon>
        <taxon>Enterobacterales</taxon>
        <taxon>Enterobacteriaceae</taxon>
        <taxon>Escherichia</taxon>
    </lineage>
</organism>
<proteinExistence type="inferred from homology"/>
<sequence length="116" mass="13316">MHTSELLKHIYDINLSYLLLAQRLIVQDKASAMFRLGINEEMATTLAALTLPQMVKLAETNQLVCHFRFDSHQTITQLTQDSRVDDLQQIHTGIMLSTRLLNDVNQPEEALRKKRA</sequence>
<reference key="1">
    <citation type="journal article" date="2002" name="Proc. Natl. Acad. Sci. U.S.A.">
        <title>Extensive mosaic structure revealed by the complete genome sequence of uropathogenic Escherichia coli.</title>
        <authorList>
            <person name="Welch R.A."/>
            <person name="Burland V."/>
            <person name="Plunkett G. III"/>
            <person name="Redford P."/>
            <person name="Roesch P."/>
            <person name="Rasko D."/>
            <person name="Buckles E.L."/>
            <person name="Liou S.-R."/>
            <person name="Boutin A."/>
            <person name="Hackett J."/>
            <person name="Stroud D."/>
            <person name="Mayhew G.F."/>
            <person name="Rose D.J."/>
            <person name="Zhou S."/>
            <person name="Schwartz D.C."/>
            <person name="Perna N.T."/>
            <person name="Mobley H.L.T."/>
            <person name="Donnenberg M.S."/>
            <person name="Blattner F.R."/>
        </authorList>
    </citation>
    <scope>NUCLEOTIDE SEQUENCE [LARGE SCALE GENOMIC DNA]</scope>
    <source>
        <strain>CFT073 / ATCC 700928 / UPEC</strain>
    </source>
</reference>
<accession>P0A8T0</accession>
<accession>P11164</accession>